<organism>
    <name type="scientific">Photorhabdus laumondii subsp. laumondii (strain DSM 15139 / CIP 105565 / TT01)</name>
    <name type="common">Photorhabdus luminescens subsp. laumondii</name>
    <dbReference type="NCBI Taxonomy" id="243265"/>
    <lineage>
        <taxon>Bacteria</taxon>
        <taxon>Pseudomonadati</taxon>
        <taxon>Pseudomonadota</taxon>
        <taxon>Gammaproteobacteria</taxon>
        <taxon>Enterobacterales</taxon>
        <taxon>Morganellaceae</taxon>
        <taxon>Photorhabdus</taxon>
    </lineage>
</organism>
<reference key="1">
    <citation type="journal article" date="2003" name="Nat. Biotechnol.">
        <title>The genome sequence of the entomopathogenic bacterium Photorhabdus luminescens.</title>
        <authorList>
            <person name="Duchaud E."/>
            <person name="Rusniok C."/>
            <person name="Frangeul L."/>
            <person name="Buchrieser C."/>
            <person name="Givaudan A."/>
            <person name="Taourit S."/>
            <person name="Bocs S."/>
            <person name="Boursaux-Eude C."/>
            <person name="Chandler M."/>
            <person name="Charles J.-F."/>
            <person name="Dassa E."/>
            <person name="Derose R."/>
            <person name="Derzelle S."/>
            <person name="Freyssinet G."/>
            <person name="Gaudriault S."/>
            <person name="Medigue C."/>
            <person name="Lanois A."/>
            <person name="Powell K."/>
            <person name="Siguier P."/>
            <person name="Vincent R."/>
            <person name="Wingate V."/>
            <person name="Zouine M."/>
            <person name="Glaser P."/>
            <person name="Boemare N."/>
            <person name="Danchin A."/>
            <person name="Kunst F."/>
        </authorList>
    </citation>
    <scope>NUCLEOTIDE SEQUENCE [LARGE SCALE GENOMIC DNA]</scope>
    <source>
        <strain>DSM 15139 / CIP 105565 / TT01</strain>
    </source>
</reference>
<sequence length="296" mass="32430">MPWIQLRLNTTGQLAESLGDALMENGAVSVTFQDSHDNPVFEPLPGETRLWGDTDVIGLYDAETDMKAVISQLEQVPELGERFIHKIEQLEDKDWEREWMDNFHPMRFGNRLWICPSWRDVPDPDAVNVMLDPGLAFGTGTHPTTSLCLQWLDSLNLEGKTVIDFGCGSGILAIAALKLGATHAIGIDIDPQAIQASRDNAERNGVLEHLTLYLAKNTPTDLESDVVIANILAGPLRELAPVIGALPKPGGLLGLSGILTNQAESVIQAYTDKFVIDPVAEREEWCRISGVKIATN</sequence>
<feature type="chain" id="PRO_0000192286" description="Ribosomal protein L11 methyltransferase">
    <location>
        <begin position="1"/>
        <end position="296"/>
    </location>
</feature>
<feature type="binding site" evidence="1">
    <location>
        <position position="145"/>
    </location>
    <ligand>
        <name>S-adenosyl-L-methionine</name>
        <dbReference type="ChEBI" id="CHEBI:59789"/>
    </ligand>
</feature>
<feature type="binding site" evidence="1">
    <location>
        <position position="166"/>
    </location>
    <ligand>
        <name>S-adenosyl-L-methionine</name>
        <dbReference type="ChEBI" id="CHEBI:59789"/>
    </ligand>
</feature>
<feature type="binding site" evidence="1">
    <location>
        <position position="188"/>
    </location>
    <ligand>
        <name>S-adenosyl-L-methionine</name>
        <dbReference type="ChEBI" id="CHEBI:59789"/>
    </ligand>
</feature>
<feature type="binding site" evidence="1">
    <location>
        <position position="230"/>
    </location>
    <ligand>
        <name>S-adenosyl-L-methionine</name>
        <dbReference type="ChEBI" id="CHEBI:59789"/>
    </ligand>
</feature>
<gene>
    <name evidence="1" type="primary">prmA</name>
    <name type="ordered locus">plu4087</name>
</gene>
<accession>P60092</accession>
<accession>Q7N017</accession>
<evidence type="ECO:0000255" key="1">
    <source>
        <dbReference type="HAMAP-Rule" id="MF_00735"/>
    </source>
</evidence>
<comment type="function">
    <text evidence="1">Methylates ribosomal protein L11.</text>
</comment>
<comment type="catalytic activity">
    <reaction evidence="1">
        <text>L-lysyl-[protein] + 3 S-adenosyl-L-methionine = N(6),N(6),N(6)-trimethyl-L-lysyl-[protein] + 3 S-adenosyl-L-homocysteine + 3 H(+)</text>
        <dbReference type="Rhea" id="RHEA:54192"/>
        <dbReference type="Rhea" id="RHEA-COMP:9752"/>
        <dbReference type="Rhea" id="RHEA-COMP:13826"/>
        <dbReference type="ChEBI" id="CHEBI:15378"/>
        <dbReference type="ChEBI" id="CHEBI:29969"/>
        <dbReference type="ChEBI" id="CHEBI:57856"/>
        <dbReference type="ChEBI" id="CHEBI:59789"/>
        <dbReference type="ChEBI" id="CHEBI:61961"/>
    </reaction>
</comment>
<comment type="subcellular location">
    <subcellularLocation>
        <location evidence="1">Cytoplasm</location>
    </subcellularLocation>
</comment>
<comment type="similarity">
    <text evidence="1">Belongs to the methyltransferase superfamily. PrmA family.</text>
</comment>
<dbReference type="EC" id="2.1.1.-" evidence="1"/>
<dbReference type="EMBL" id="BX571872">
    <property type="protein sequence ID" value="CAE16459.1"/>
    <property type="molecule type" value="Genomic_DNA"/>
</dbReference>
<dbReference type="RefSeq" id="WP_011148209.1">
    <property type="nucleotide sequence ID" value="NC_005126.1"/>
</dbReference>
<dbReference type="SMR" id="P60092"/>
<dbReference type="STRING" id="243265.plu4087"/>
<dbReference type="GeneID" id="48850305"/>
<dbReference type="KEGG" id="plu:plu4087"/>
<dbReference type="eggNOG" id="COG2264">
    <property type="taxonomic scope" value="Bacteria"/>
</dbReference>
<dbReference type="HOGENOM" id="CLU_049382_4_1_6"/>
<dbReference type="OrthoDB" id="9785995at2"/>
<dbReference type="Proteomes" id="UP000002514">
    <property type="component" value="Chromosome"/>
</dbReference>
<dbReference type="GO" id="GO:0005829">
    <property type="term" value="C:cytosol"/>
    <property type="evidence" value="ECO:0007669"/>
    <property type="project" value="TreeGrafter"/>
</dbReference>
<dbReference type="GO" id="GO:0016279">
    <property type="term" value="F:protein-lysine N-methyltransferase activity"/>
    <property type="evidence" value="ECO:0007669"/>
    <property type="project" value="TreeGrafter"/>
</dbReference>
<dbReference type="GO" id="GO:0032259">
    <property type="term" value="P:methylation"/>
    <property type="evidence" value="ECO:0007669"/>
    <property type="project" value="UniProtKB-KW"/>
</dbReference>
<dbReference type="CDD" id="cd02440">
    <property type="entry name" value="AdoMet_MTases"/>
    <property type="match status" value="1"/>
</dbReference>
<dbReference type="Gene3D" id="3.40.50.150">
    <property type="entry name" value="Vaccinia Virus protein VP39"/>
    <property type="match status" value="1"/>
</dbReference>
<dbReference type="HAMAP" id="MF_00735">
    <property type="entry name" value="Methyltr_PrmA"/>
    <property type="match status" value="1"/>
</dbReference>
<dbReference type="InterPro" id="IPR050078">
    <property type="entry name" value="Ribosomal_L11_MeTrfase_PrmA"/>
</dbReference>
<dbReference type="InterPro" id="IPR004498">
    <property type="entry name" value="Ribosomal_PrmA_MeTrfase"/>
</dbReference>
<dbReference type="InterPro" id="IPR029063">
    <property type="entry name" value="SAM-dependent_MTases_sf"/>
</dbReference>
<dbReference type="NCBIfam" id="TIGR00406">
    <property type="entry name" value="prmA"/>
    <property type="match status" value="1"/>
</dbReference>
<dbReference type="PANTHER" id="PTHR43648">
    <property type="entry name" value="ELECTRON TRANSFER FLAVOPROTEIN BETA SUBUNIT LYSINE METHYLTRANSFERASE"/>
    <property type="match status" value="1"/>
</dbReference>
<dbReference type="PANTHER" id="PTHR43648:SF1">
    <property type="entry name" value="ELECTRON TRANSFER FLAVOPROTEIN BETA SUBUNIT LYSINE METHYLTRANSFERASE"/>
    <property type="match status" value="1"/>
</dbReference>
<dbReference type="Pfam" id="PF06325">
    <property type="entry name" value="PrmA"/>
    <property type="match status" value="1"/>
</dbReference>
<dbReference type="PIRSF" id="PIRSF000401">
    <property type="entry name" value="RPL11_MTase"/>
    <property type="match status" value="1"/>
</dbReference>
<dbReference type="SUPFAM" id="SSF53335">
    <property type="entry name" value="S-adenosyl-L-methionine-dependent methyltransferases"/>
    <property type="match status" value="1"/>
</dbReference>
<proteinExistence type="inferred from homology"/>
<name>PRMA_PHOLL</name>
<keyword id="KW-0963">Cytoplasm</keyword>
<keyword id="KW-0489">Methyltransferase</keyword>
<keyword id="KW-1185">Reference proteome</keyword>
<keyword id="KW-0949">S-adenosyl-L-methionine</keyword>
<keyword id="KW-0808">Transferase</keyword>
<protein>
    <recommendedName>
        <fullName evidence="1">Ribosomal protein L11 methyltransferase</fullName>
        <shortName evidence="1">L11 Mtase</shortName>
        <ecNumber evidence="1">2.1.1.-</ecNumber>
    </recommendedName>
</protein>